<accession>P57038</accession>
<accession>A1IP42</accession>
<reference key="1">
    <citation type="journal article" date="2000" name="Nature">
        <title>Complete DNA sequence of a serogroup A strain of Neisseria meningitidis Z2491.</title>
        <authorList>
            <person name="Parkhill J."/>
            <person name="Achtman M."/>
            <person name="James K.D."/>
            <person name="Bentley S.D."/>
            <person name="Churcher C.M."/>
            <person name="Klee S.R."/>
            <person name="Morelli G."/>
            <person name="Basham D."/>
            <person name="Brown D."/>
            <person name="Chillingworth T."/>
            <person name="Davies R.M."/>
            <person name="Davis P."/>
            <person name="Devlin K."/>
            <person name="Feltwell T."/>
            <person name="Hamlin N."/>
            <person name="Holroyd S."/>
            <person name="Jagels K."/>
            <person name="Leather S."/>
            <person name="Moule S."/>
            <person name="Mungall K.L."/>
            <person name="Quail M.A."/>
            <person name="Rajandream M.A."/>
            <person name="Rutherford K.M."/>
            <person name="Simmonds M."/>
            <person name="Skelton J."/>
            <person name="Whitehead S."/>
            <person name="Spratt B.G."/>
            <person name="Barrell B.G."/>
        </authorList>
    </citation>
    <scope>NUCLEOTIDE SEQUENCE [LARGE SCALE GENOMIC DNA]</scope>
    <source>
        <strain>DSM 15465 / Z2491</strain>
    </source>
</reference>
<organism>
    <name type="scientific">Neisseria meningitidis serogroup A / serotype 4A (strain DSM 15465 / Z2491)</name>
    <dbReference type="NCBI Taxonomy" id="122587"/>
    <lineage>
        <taxon>Bacteria</taxon>
        <taxon>Pseudomonadati</taxon>
        <taxon>Pseudomonadota</taxon>
        <taxon>Betaproteobacteria</taxon>
        <taxon>Neisseriales</taxon>
        <taxon>Neisseriaceae</taxon>
        <taxon>Neisseria</taxon>
    </lineage>
</organism>
<proteinExistence type="predicted"/>
<feature type="chain" id="PRO_0000084463" description="Capsule polysaccharide modification protein LipB">
    <location>
        <begin position="1"/>
        <end position="419"/>
    </location>
</feature>
<dbReference type="EMBL" id="AL157959">
    <property type="protein sequence ID" value="CAM07500.1"/>
    <property type="molecule type" value="Genomic_DNA"/>
</dbReference>
<dbReference type="PIR" id="G82012">
    <property type="entry name" value="G82012"/>
</dbReference>
<dbReference type="RefSeq" id="WP_002233385.1">
    <property type="nucleotide sequence ID" value="NC_003116.1"/>
</dbReference>
<dbReference type="SMR" id="P57038"/>
<dbReference type="EnsemblBacteria" id="CAM07500">
    <property type="protein sequence ID" value="CAM07500"/>
    <property type="gene ID" value="NMA0185"/>
</dbReference>
<dbReference type="KEGG" id="nma:NMA0185"/>
<dbReference type="HOGENOM" id="CLU_040135_1_0_4"/>
<dbReference type="Proteomes" id="UP000000626">
    <property type="component" value="Chromosome"/>
</dbReference>
<dbReference type="GO" id="GO:0005886">
    <property type="term" value="C:plasma membrane"/>
    <property type="evidence" value="ECO:0007669"/>
    <property type="project" value="UniProtKB-SubCell"/>
</dbReference>
<dbReference type="GO" id="GO:0000271">
    <property type="term" value="P:polysaccharide biosynthetic process"/>
    <property type="evidence" value="ECO:0007669"/>
    <property type="project" value="InterPro"/>
</dbReference>
<dbReference type="GO" id="GO:0015774">
    <property type="term" value="P:polysaccharide transport"/>
    <property type="evidence" value="ECO:0007669"/>
    <property type="project" value="UniProtKB-KW"/>
</dbReference>
<dbReference type="CDD" id="cd16441">
    <property type="entry name" value="beta_Kdo_transferase_KpsS"/>
    <property type="match status" value="1"/>
</dbReference>
<dbReference type="InterPro" id="IPR007833">
    <property type="entry name" value="Capsule_polysaccharide_synth"/>
</dbReference>
<dbReference type="Pfam" id="PF05159">
    <property type="entry name" value="Capsule_synth"/>
    <property type="match status" value="1"/>
</dbReference>
<sequence length="419" mass="48695">MKQTVLKNNLQNLLESAENILLLQGPVGDFFLRLADWLTANGKTVHKFNFNAGDDYFYPPTQAHTVVFNDNYDAFPEFLQEYITQHHIQAVVCFGDTRPYHVIAKRIANENQASFWAFEEGYFRPYYITLEKDGVNAFSPLPRRADFFLEQFPKLAQQEYKAPTPVHGGFTPMAKNAIRYYIELFRNLRKYPDYIHHRAPNAGHYLKPWSLSILKRLNYYIEDIQIAKRVEAGKYGKFFIVPLQVFNDSQVRIHCDFPSVRSFLLHVLSSFAEHAPADTNIIIKHHPMDRGFIDYWRDIKRFIKEHPELKGRVIYVHDVPLPVFLRHGLGMVTINSTSGLSGLIHNMPVKVLGRAYYDIPGITDQNTLAEFWNHPTPPDKELFHAYRMYHLNVTQINGNFYSQVFFPNKNTSDSSTPTT</sequence>
<protein>
    <recommendedName>
        <fullName>Capsule polysaccharide modification protein LipB</fullName>
    </recommendedName>
</protein>
<name>LPB1_NEIMA</name>
<gene>
    <name type="primary">lipB</name>
    <name type="ordered locus">NMA0185</name>
</gene>
<comment type="function">
    <text>Involved in the phospholipid modification of the capsular polysaccharide, a strong requirement for its translocation to the cell surface.</text>
</comment>
<comment type="subcellular location">
    <subcellularLocation>
        <location evidence="1">Cell inner membrane</location>
        <topology evidence="1">Peripheral membrane protein</topology>
        <orientation evidence="1">Cytoplasmic side</orientation>
    </subcellularLocation>
</comment>
<keyword id="KW-0997">Cell inner membrane</keyword>
<keyword id="KW-1003">Cell membrane</keyword>
<keyword id="KW-0472">Membrane</keyword>
<keyword id="KW-0625">Polysaccharide transport</keyword>
<keyword id="KW-0762">Sugar transport</keyword>
<keyword id="KW-0813">Transport</keyword>
<evidence type="ECO:0000305" key="1"/>